<organism>
    <name type="scientific">Oryza sativa subsp. japonica</name>
    <name type="common">Rice</name>
    <dbReference type="NCBI Taxonomy" id="39947"/>
    <lineage>
        <taxon>Eukaryota</taxon>
        <taxon>Viridiplantae</taxon>
        <taxon>Streptophyta</taxon>
        <taxon>Embryophyta</taxon>
        <taxon>Tracheophyta</taxon>
        <taxon>Spermatophyta</taxon>
        <taxon>Magnoliopsida</taxon>
        <taxon>Liliopsida</taxon>
        <taxon>Poales</taxon>
        <taxon>Poaceae</taxon>
        <taxon>BOP clade</taxon>
        <taxon>Oryzoideae</taxon>
        <taxon>Oryzeae</taxon>
        <taxon>Oryzinae</taxon>
        <taxon>Oryza</taxon>
        <taxon>Oryza sativa</taxon>
    </lineage>
</organism>
<evidence type="ECO:0000250" key="1"/>
<evidence type="ECO:0000255" key="2">
    <source>
        <dbReference type="PROSITE-ProRule" id="PRU00224"/>
    </source>
</evidence>
<evidence type="ECO:0000255" key="3">
    <source>
        <dbReference type="PROSITE-ProRule" id="PRU00541"/>
    </source>
</evidence>
<evidence type="ECO:0000255" key="4">
    <source>
        <dbReference type="PROSITE-ProRule" id="PRU00542"/>
    </source>
</evidence>
<evidence type="ECO:0000256" key="5">
    <source>
        <dbReference type="SAM" id="MobiDB-lite"/>
    </source>
</evidence>
<evidence type="ECO:0000303" key="6">
    <source>
    </source>
</evidence>
<evidence type="ECO:0000305" key="7"/>
<sequence>MSAGTAPAAPRYAPDDPSLPKPWRGLVDGTTGYLYYWNPETNITQYEKPLPPEDQLPPPPPLPPPPPRSGRGDRDRDRRDRSRSRTPPRRDHRDRDRDRDRRHDDHRSAPSHHHPLPAAAAIAADDPSTEAYRHRHEITVVGDNVPAPITSFETGGFPPEILKEIQRAGFSSPTPIQAQSWPIALQCQDVVAIAKTGSGKTLGYLLPGFMHIKRLQNNPRSGPTVLVLAPTRELATQILEEAVKFGRSSRISSTCLYGGAPKGPQLRDLDRGVDVVVATPGRLNDILEMRRISLKQVSYLVLDEADRMLDMGFEPQIRKIVKEIPPRRQTLMYTATWPKEVRRIAEDLLVHPVQVTIGSVDELVANSAITQNVELITPSEKLRRLEQILRSQDSGSKVLIFCTTKRMCDQLARTLTRQFGASAIHGDKSQSEREKVLSHFRSGRSPILVATDVAARGLDIKDIRVVINYDFPTGIEDYVHRIGRTGRAGATGVAYTFFCDQDSKYAADLIKILEGANQRVPRDLADMASRGGRGGRKRNRWATRSDRGGSHSELDSRYGGRDGLSGSSGRLDSSRSSRRHDYGDDGRSRRSGRGRSRSRSRSDSDRYSRSPKRSRRHSRSRTRSRSRSRSRSYTRNRRASRSRSRSPGASRRHERSATGSGSALPDSGHGERKRTPEADPSRNHTNHSDPKDDRHPEDGKVGKVDLDRSPTPQDKSGPYSPAYNGKTSRSVSPGNQVEGNNKAAEVSKNPDPSSPPHHGKTREDEEEGMIDEDGEIADDPRANATVQNGGDN</sequence>
<reference key="1">
    <citation type="journal article" date="2002" name="Nature">
        <title>The genome sequence and structure of rice chromosome 1.</title>
        <authorList>
            <person name="Sasaki T."/>
            <person name="Matsumoto T."/>
            <person name="Yamamoto K."/>
            <person name="Sakata K."/>
            <person name="Baba T."/>
            <person name="Katayose Y."/>
            <person name="Wu J."/>
            <person name="Niimura Y."/>
            <person name="Cheng Z."/>
            <person name="Nagamura Y."/>
            <person name="Antonio B.A."/>
            <person name="Kanamori H."/>
            <person name="Hosokawa S."/>
            <person name="Masukawa M."/>
            <person name="Arikawa K."/>
            <person name="Chiden Y."/>
            <person name="Hayashi M."/>
            <person name="Okamoto M."/>
            <person name="Ando T."/>
            <person name="Aoki H."/>
            <person name="Arita K."/>
            <person name="Hamada M."/>
            <person name="Harada C."/>
            <person name="Hijishita S."/>
            <person name="Honda M."/>
            <person name="Ichikawa Y."/>
            <person name="Idonuma A."/>
            <person name="Iijima M."/>
            <person name="Ikeda M."/>
            <person name="Ikeno M."/>
            <person name="Ito S."/>
            <person name="Ito T."/>
            <person name="Ito Y."/>
            <person name="Ito Y."/>
            <person name="Iwabuchi A."/>
            <person name="Kamiya K."/>
            <person name="Karasawa W."/>
            <person name="Katagiri S."/>
            <person name="Kikuta A."/>
            <person name="Kobayashi N."/>
            <person name="Kono I."/>
            <person name="Machita K."/>
            <person name="Maehara T."/>
            <person name="Mizuno H."/>
            <person name="Mizubayashi T."/>
            <person name="Mukai Y."/>
            <person name="Nagasaki H."/>
            <person name="Nakashima M."/>
            <person name="Nakama Y."/>
            <person name="Nakamichi Y."/>
            <person name="Nakamura M."/>
            <person name="Namiki N."/>
            <person name="Negishi M."/>
            <person name="Ohta I."/>
            <person name="Ono N."/>
            <person name="Saji S."/>
            <person name="Sakai K."/>
            <person name="Shibata M."/>
            <person name="Shimokawa T."/>
            <person name="Shomura A."/>
            <person name="Song J."/>
            <person name="Takazaki Y."/>
            <person name="Terasawa K."/>
            <person name="Tsuji K."/>
            <person name="Waki K."/>
            <person name="Yamagata H."/>
            <person name="Yamane H."/>
            <person name="Yoshiki S."/>
            <person name="Yoshihara R."/>
            <person name="Yukawa K."/>
            <person name="Zhong H."/>
            <person name="Iwama H."/>
            <person name="Endo T."/>
            <person name="Ito H."/>
            <person name="Hahn J.H."/>
            <person name="Kim H.-I."/>
            <person name="Eun M.-Y."/>
            <person name="Yano M."/>
            <person name="Jiang J."/>
            <person name="Gojobori T."/>
        </authorList>
    </citation>
    <scope>NUCLEOTIDE SEQUENCE [LARGE SCALE GENOMIC DNA]</scope>
    <source>
        <strain>cv. Nipponbare</strain>
    </source>
</reference>
<reference key="2">
    <citation type="journal article" date="2005" name="Nature">
        <title>The map-based sequence of the rice genome.</title>
        <authorList>
            <consortium name="International rice genome sequencing project (IRGSP)"/>
        </authorList>
    </citation>
    <scope>NUCLEOTIDE SEQUENCE [LARGE SCALE GENOMIC DNA]</scope>
    <source>
        <strain>cv. Nipponbare</strain>
    </source>
</reference>
<reference key="3">
    <citation type="journal article" date="2008" name="Nucleic Acids Res.">
        <title>The rice annotation project database (RAP-DB): 2008 update.</title>
        <authorList>
            <consortium name="The rice annotation project (RAP)"/>
        </authorList>
    </citation>
    <scope>GENOME REANNOTATION</scope>
    <source>
        <strain>cv. Nipponbare</strain>
    </source>
</reference>
<reference key="4">
    <citation type="journal article" date="2013" name="Rice">
        <title>Improvement of the Oryza sativa Nipponbare reference genome using next generation sequence and optical map data.</title>
        <authorList>
            <person name="Kawahara Y."/>
            <person name="de la Bastide M."/>
            <person name="Hamilton J.P."/>
            <person name="Kanamori H."/>
            <person name="McCombie W.R."/>
            <person name="Ouyang S."/>
            <person name="Schwartz D.C."/>
            <person name="Tanaka T."/>
            <person name="Wu J."/>
            <person name="Zhou S."/>
            <person name="Childs K.L."/>
            <person name="Davidson R.M."/>
            <person name="Lin H."/>
            <person name="Quesada-Ocampo L."/>
            <person name="Vaillancourt B."/>
            <person name="Sakai H."/>
            <person name="Lee S.S."/>
            <person name="Kim J."/>
            <person name="Numa H."/>
            <person name="Itoh T."/>
            <person name="Buell C.R."/>
            <person name="Matsumoto T."/>
        </authorList>
    </citation>
    <scope>GENOME REANNOTATION</scope>
    <source>
        <strain>cv. Nipponbare</strain>
    </source>
</reference>
<reference key="5">
    <citation type="journal article" date="2005" name="PLoS Biol.">
        <title>The genomes of Oryza sativa: a history of duplications.</title>
        <authorList>
            <person name="Yu J."/>
            <person name="Wang J."/>
            <person name="Lin W."/>
            <person name="Li S."/>
            <person name="Li H."/>
            <person name="Zhou J."/>
            <person name="Ni P."/>
            <person name="Dong W."/>
            <person name="Hu S."/>
            <person name="Zeng C."/>
            <person name="Zhang J."/>
            <person name="Zhang Y."/>
            <person name="Li R."/>
            <person name="Xu Z."/>
            <person name="Li S."/>
            <person name="Li X."/>
            <person name="Zheng H."/>
            <person name="Cong L."/>
            <person name="Lin L."/>
            <person name="Yin J."/>
            <person name="Geng J."/>
            <person name="Li G."/>
            <person name="Shi J."/>
            <person name="Liu J."/>
            <person name="Lv H."/>
            <person name="Li J."/>
            <person name="Wang J."/>
            <person name="Deng Y."/>
            <person name="Ran L."/>
            <person name="Shi X."/>
            <person name="Wang X."/>
            <person name="Wu Q."/>
            <person name="Li C."/>
            <person name="Ren X."/>
            <person name="Wang J."/>
            <person name="Wang X."/>
            <person name="Li D."/>
            <person name="Liu D."/>
            <person name="Zhang X."/>
            <person name="Ji Z."/>
            <person name="Zhao W."/>
            <person name="Sun Y."/>
            <person name="Zhang Z."/>
            <person name="Bao J."/>
            <person name="Han Y."/>
            <person name="Dong L."/>
            <person name="Ji J."/>
            <person name="Chen P."/>
            <person name="Wu S."/>
            <person name="Liu J."/>
            <person name="Xiao Y."/>
            <person name="Bu D."/>
            <person name="Tan J."/>
            <person name="Yang L."/>
            <person name="Ye C."/>
            <person name="Zhang J."/>
            <person name="Xu J."/>
            <person name="Zhou Y."/>
            <person name="Yu Y."/>
            <person name="Zhang B."/>
            <person name="Zhuang S."/>
            <person name="Wei H."/>
            <person name="Liu B."/>
            <person name="Lei M."/>
            <person name="Yu H."/>
            <person name="Li Y."/>
            <person name="Xu H."/>
            <person name="Wei S."/>
            <person name="He X."/>
            <person name="Fang L."/>
            <person name="Zhang Z."/>
            <person name="Zhang Y."/>
            <person name="Huang X."/>
            <person name="Su Z."/>
            <person name="Tong W."/>
            <person name="Li J."/>
            <person name="Tong Z."/>
            <person name="Li S."/>
            <person name="Ye J."/>
            <person name="Wang L."/>
            <person name="Fang L."/>
            <person name="Lei T."/>
            <person name="Chen C.-S."/>
            <person name="Chen H.-C."/>
            <person name="Xu Z."/>
            <person name="Li H."/>
            <person name="Huang H."/>
            <person name="Zhang F."/>
            <person name="Xu H."/>
            <person name="Li N."/>
            <person name="Zhao C."/>
            <person name="Li S."/>
            <person name="Dong L."/>
            <person name="Huang Y."/>
            <person name="Li L."/>
            <person name="Xi Y."/>
            <person name="Qi Q."/>
            <person name="Li W."/>
            <person name="Zhang B."/>
            <person name="Hu W."/>
            <person name="Zhang Y."/>
            <person name="Tian X."/>
            <person name="Jiao Y."/>
            <person name="Liang X."/>
            <person name="Jin J."/>
            <person name="Gao L."/>
            <person name="Zheng W."/>
            <person name="Hao B."/>
            <person name="Liu S.-M."/>
            <person name="Wang W."/>
            <person name="Yuan L."/>
            <person name="Cao M."/>
            <person name="McDermott J."/>
            <person name="Samudrala R."/>
            <person name="Wang J."/>
            <person name="Wong G.K.-S."/>
            <person name="Yang H."/>
        </authorList>
    </citation>
    <scope>NUCLEOTIDE SEQUENCE [LARGE SCALE GENOMIC DNA]</scope>
    <source>
        <strain>cv. Nipponbare</strain>
    </source>
</reference>
<reference key="6">
    <citation type="journal article" date="2003" name="Science">
        <title>Collection, mapping, and annotation of over 28,000 cDNA clones from japonica rice.</title>
        <authorList>
            <consortium name="The rice full-length cDNA consortium"/>
        </authorList>
    </citation>
    <scope>NUCLEOTIDE SEQUENCE [LARGE SCALE MRNA] (ISOFORMS 1 AND 2)</scope>
    <source>
        <strain>cv. Nipponbare</strain>
    </source>
</reference>
<feature type="chain" id="PRO_0000282457" description="DEAD-box ATP-dependent RNA helicase 40">
    <location>
        <begin position="1"/>
        <end position="792"/>
    </location>
</feature>
<feature type="domain" description="WW" evidence="2">
    <location>
        <begin position="17"/>
        <end position="51"/>
    </location>
</feature>
<feature type="domain" description="Helicase ATP-binding" evidence="3">
    <location>
        <begin position="181"/>
        <end position="355"/>
    </location>
</feature>
<feature type="domain" description="Helicase C-terminal" evidence="4">
    <location>
        <begin position="384"/>
        <end position="528"/>
    </location>
</feature>
<feature type="region of interest" description="Disordered" evidence="5">
    <location>
        <begin position="1"/>
        <end position="25"/>
    </location>
</feature>
<feature type="region of interest" description="Disordered" evidence="5">
    <location>
        <begin position="44"/>
        <end position="118"/>
    </location>
</feature>
<feature type="region of interest" description="Disordered" evidence="5">
    <location>
        <begin position="523"/>
        <end position="792"/>
    </location>
</feature>
<feature type="short sequence motif" description="Q motif">
    <location>
        <begin position="150"/>
        <end position="178"/>
    </location>
</feature>
<feature type="short sequence motif" description="DEAD box">
    <location>
        <begin position="303"/>
        <end position="306"/>
    </location>
</feature>
<feature type="compositionally biased region" description="Low complexity" evidence="5">
    <location>
        <begin position="1"/>
        <end position="16"/>
    </location>
</feature>
<feature type="compositionally biased region" description="Pro residues" evidence="5">
    <location>
        <begin position="52"/>
        <end position="68"/>
    </location>
</feature>
<feature type="compositionally biased region" description="Basic and acidic residues" evidence="5">
    <location>
        <begin position="70"/>
        <end position="80"/>
    </location>
</feature>
<feature type="compositionally biased region" description="Basic and acidic residues" evidence="5">
    <location>
        <begin position="88"/>
        <end position="108"/>
    </location>
</feature>
<feature type="compositionally biased region" description="Basic and acidic residues" evidence="5">
    <location>
        <begin position="543"/>
        <end position="560"/>
    </location>
</feature>
<feature type="compositionally biased region" description="Basic and acidic residues" evidence="5">
    <location>
        <begin position="572"/>
        <end position="588"/>
    </location>
</feature>
<feature type="compositionally biased region" description="Basic residues" evidence="5">
    <location>
        <begin position="589"/>
        <end position="599"/>
    </location>
</feature>
<feature type="compositionally biased region" description="Basic residues" evidence="5">
    <location>
        <begin position="609"/>
        <end position="654"/>
    </location>
</feature>
<feature type="compositionally biased region" description="Basic and acidic residues" evidence="5">
    <location>
        <begin position="668"/>
        <end position="708"/>
    </location>
</feature>
<feature type="compositionally biased region" description="Polar residues" evidence="5">
    <location>
        <begin position="725"/>
        <end position="739"/>
    </location>
</feature>
<feature type="compositionally biased region" description="Acidic residues" evidence="5">
    <location>
        <begin position="764"/>
        <end position="777"/>
    </location>
</feature>
<feature type="binding site" evidence="3">
    <location>
        <begin position="194"/>
        <end position="201"/>
    </location>
    <ligand>
        <name>ATP</name>
        <dbReference type="ChEBI" id="CHEBI:30616"/>
    </ligand>
</feature>
<feature type="splice variant" id="VSP_024159" description="In isoform 2." evidence="6">
    <location>
        <begin position="1"/>
        <end position="141"/>
    </location>
</feature>
<feature type="splice variant" id="VSP_024160" description="In isoform 2." evidence="6">
    <original>GDNVPAPITSFETGGFPPEILKE</original>
    <variation>MLLEPFLLHLAHASQHILDALSF</variation>
    <location>
        <begin position="142"/>
        <end position="164"/>
    </location>
</feature>
<feature type="sequence conflict" description="In Ref. 6; AK122104." evidence="7" ref="6">
    <original>I</original>
    <variation>V</variation>
    <location>
        <position position="344"/>
    </location>
</feature>
<feature type="sequence conflict" description="In Ref. 6; AK102720." evidence="7" ref="6">
    <original>I</original>
    <variation>T</variation>
    <location>
        <position position="512"/>
    </location>
</feature>
<dbReference type="EC" id="3.6.4.13"/>
<dbReference type="EMBL" id="AP004225">
    <property type="protein sequence ID" value="BAD88050.1"/>
    <property type="molecule type" value="Genomic_DNA"/>
</dbReference>
<dbReference type="EMBL" id="AP004225">
    <property type="protein sequence ID" value="BAD88051.1"/>
    <property type="molecule type" value="Genomic_DNA"/>
</dbReference>
<dbReference type="EMBL" id="AP008207">
    <property type="protein sequence ID" value="BAF05209.1"/>
    <property type="molecule type" value="Genomic_DNA"/>
</dbReference>
<dbReference type="EMBL" id="AP014957">
    <property type="protein sequence ID" value="BAS72626.1"/>
    <property type="molecule type" value="Genomic_DNA"/>
</dbReference>
<dbReference type="EMBL" id="AP014957">
    <property type="protein sequence ID" value="BAS72627.1"/>
    <property type="molecule type" value="Genomic_DNA"/>
</dbReference>
<dbReference type="EMBL" id="CM000138">
    <property type="protein sequence ID" value="EAZ12284.1"/>
    <property type="molecule type" value="Genomic_DNA"/>
</dbReference>
<dbReference type="EMBL" id="AK102720">
    <property type="status" value="NOT_ANNOTATED_CDS"/>
    <property type="molecule type" value="mRNA"/>
</dbReference>
<dbReference type="EMBL" id="AK122104">
    <property type="status" value="NOT_ANNOTATED_CDS"/>
    <property type="molecule type" value="mRNA"/>
</dbReference>
<dbReference type="RefSeq" id="XP_015620980.1">
    <property type="nucleotide sequence ID" value="XM_015765494.1"/>
</dbReference>
<dbReference type="RefSeq" id="XP_015620981.1">
    <molecule id="Q5JKF2-2"/>
    <property type="nucleotide sequence ID" value="XM_015765495.1"/>
</dbReference>
<dbReference type="SMR" id="Q5JKF2"/>
<dbReference type="FunCoup" id="Q5JKF2">
    <property type="interactions" value="1"/>
</dbReference>
<dbReference type="STRING" id="39947.Q5JKF2"/>
<dbReference type="PaxDb" id="39947-Q5JKF2"/>
<dbReference type="EnsemblPlants" id="Os01t0549400-01">
    <molecule id="Q5JKF2-1"/>
    <property type="protein sequence ID" value="Os01t0549400-01"/>
    <property type="gene ID" value="Os01g0549400"/>
</dbReference>
<dbReference type="GeneID" id="4326190"/>
<dbReference type="Gramene" id="Os01t0549400-01">
    <molecule id="Q5JKF2-1"/>
    <property type="protein sequence ID" value="Os01t0549400-01"/>
    <property type="gene ID" value="Os01g0549400"/>
</dbReference>
<dbReference type="KEGG" id="dosa:Os01g0549400"/>
<dbReference type="eggNOG" id="KOG0331">
    <property type="taxonomic scope" value="Eukaryota"/>
</dbReference>
<dbReference type="InParanoid" id="Q5JKF2"/>
<dbReference type="OMA" id="DMICVAK"/>
<dbReference type="OrthoDB" id="196131at2759"/>
<dbReference type="Proteomes" id="UP000000763">
    <property type="component" value="Chromosome 1"/>
</dbReference>
<dbReference type="Proteomes" id="UP000007752">
    <property type="component" value="Chromosome 1"/>
</dbReference>
<dbReference type="Proteomes" id="UP000059680">
    <property type="component" value="Chromosome 1"/>
</dbReference>
<dbReference type="ExpressionAtlas" id="Q5JKF2">
    <property type="expression patterns" value="baseline and differential"/>
</dbReference>
<dbReference type="GO" id="GO:0005634">
    <property type="term" value="C:nucleus"/>
    <property type="evidence" value="ECO:0007669"/>
    <property type="project" value="UniProtKB-SubCell"/>
</dbReference>
<dbReference type="GO" id="GO:0005524">
    <property type="term" value="F:ATP binding"/>
    <property type="evidence" value="ECO:0007669"/>
    <property type="project" value="UniProtKB-KW"/>
</dbReference>
<dbReference type="GO" id="GO:0016887">
    <property type="term" value="F:ATP hydrolysis activity"/>
    <property type="evidence" value="ECO:0007669"/>
    <property type="project" value="RHEA"/>
</dbReference>
<dbReference type="GO" id="GO:0003729">
    <property type="term" value="F:mRNA binding"/>
    <property type="evidence" value="ECO:0000318"/>
    <property type="project" value="GO_Central"/>
</dbReference>
<dbReference type="GO" id="GO:0003724">
    <property type="term" value="F:RNA helicase activity"/>
    <property type="evidence" value="ECO:0000318"/>
    <property type="project" value="GO_Central"/>
</dbReference>
<dbReference type="GO" id="GO:0000184">
    <property type="term" value="P:nuclear-transcribed mRNA catabolic process, nonsense-mediated decay"/>
    <property type="evidence" value="ECO:0007669"/>
    <property type="project" value="UniProtKB-KW"/>
</dbReference>
<dbReference type="GO" id="GO:0006364">
    <property type="term" value="P:rRNA processing"/>
    <property type="evidence" value="ECO:0007669"/>
    <property type="project" value="UniProtKB-KW"/>
</dbReference>
<dbReference type="CDD" id="cd18787">
    <property type="entry name" value="SF2_C_DEAD"/>
    <property type="match status" value="1"/>
</dbReference>
<dbReference type="FunFam" id="3.40.50.300:FF:000008">
    <property type="entry name" value="ATP-dependent RNA helicase RhlB"/>
    <property type="match status" value="1"/>
</dbReference>
<dbReference type="FunFam" id="3.40.50.300:FF:000079">
    <property type="entry name" value="probable ATP-dependent RNA helicase DDX17"/>
    <property type="match status" value="1"/>
</dbReference>
<dbReference type="Gene3D" id="2.20.70.10">
    <property type="match status" value="1"/>
</dbReference>
<dbReference type="Gene3D" id="3.40.50.300">
    <property type="entry name" value="P-loop containing nucleotide triphosphate hydrolases"/>
    <property type="match status" value="2"/>
</dbReference>
<dbReference type="InterPro" id="IPR011545">
    <property type="entry name" value="DEAD/DEAH_box_helicase_dom"/>
</dbReference>
<dbReference type="InterPro" id="IPR014001">
    <property type="entry name" value="Helicase_ATP-bd"/>
</dbReference>
<dbReference type="InterPro" id="IPR001650">
    <property type="entry name" value="Helicase_C-like"/>
</dbReference>
<dbReference type="InterPro" id="IPR027417">
    <property type="entry name" value="P-loop_NTPase"/>
</dbReference>
<dbReference type="InterPro" id="IPR000629">
    <property type="entry name" value="RNA-helicase_DEAD-box_CS"/>
</dbReference>
<dbReference type="InterPro" id="IPR014014">
    <property type="entry name" value="RNA_helicase_DEAD_Q_motif"/>
</dbReference>
<dbReference type="InterPro" id="IPR001202">
    <property type="entry name" value="WW_dom"/>
</dbReference>
<dbReference type="InterPro" id="IPR036020">
    <property type="entry name" value="WW_dom_sf"/>
</dbReference>
<dbReference type="PANTHER" id="PTHR47958">
    <property type="entry name" value="ATP-DEPENDENT RNA HELICASE DBP3"/>
    <property type="match status" value="1"/>
</dbReference>
<dbReference type="Pfam" id="PF00270">
    <property type="entry name" value="DEAD"/>
    <property type="match status" value="1"/>
</dbReference>
<dbReference type="Pfam" id="PF00271">
    <property type="entry name" value="Helicase_C"/>
    <property type="match status" value="1"/>
</dbReference>
<dbReference type="Pfam" id="PF00397">
    <property type="entry name" value="WW"/>
    <property type="match status" value="1"/>
</dbReference>
<dbReference type="SMART" id="SM00487">
    <property type="entry name" value="DEXDc"/>
    <property type="match status" value="1"/>
</dbReference>
<dbReference type="SMART" id="SM00490">
    <property type="entry name" value="HELICc"/>
    <property type="match status" value="1"/>
</dbReference>
<dbReference type="SMART" id="SM00456">
    <property type="entry name" value="WW"/>
    <property type="match status" value="1"/>
</dbReference>
<dbReference type="SUPFAM" id="SSF52540">
    <property type="entry name" value="P-loop containing nucleoside triphosphate hydrolases"/>
    <property type="match status" value="1"/>
</dbReference>
<dbReference type="SUPFAM" id="SSF51045">
    <property type="entry name" value="WW domain"/>
    <property type="match status" value="1"/>
</dbReference>
<dbReference type="PROSITE" id="PS00039">
    <property type="entry name" value="DEAD_ATP_HELICASE"/>
    <property type="match status" value="1"/>
</dbReference>
<dbReference type="PROSITE" id="PS51192">
    <property type="entry name" value="HELICASE_ATP_BIND_1"/>
    <property type="match status" value="1"/>
</dbReference>
<dbReference type="PROSITE" id="PS51194">
    <property type="entry name" value="HELICASE_CTER"/>
    <property type="match status" value="1"/>
</dbReference>
<dbReference type="PROSITE" id="PS51195">
    <property type="entry name" value="Q_MOTIF"/>
    <property type="match status" value="1"/>
</dbReference>
<dbReference type="PROSITE" id="PS01159">
    <property type="entry name" value="WW_DOMAIN_1"/>
    <property type="match status" value="1"/>
</dbReference>
<dbReference type="PROSITE" id="PS50020">
    <property type="entry name" value="WW_DOMAIN_2"/>
    <property type="match status" value="1"/>
</dbReference>
<comment type="function">
    <text evidence="1">ATP-dependent RNA helicase involved nonsense-mediated mRNA decay and ribosome biogenesis through rRNA processing.</text>
</comment>
<comment type="catalytic activity">
    <reaction>
        <text>ATP + H2O = ADP + phosphate + H(+)</text>
        <dbReference type="Rhea" id="RHEA:13065"/>
        <dbReference type="ChEBI" id="CHEBI:15377"/>
        <dbReference type="ChEBI" id="CHEBI:15378"/>
        <dbReference type="ChEBI" id="CHEBI:30616"/>
        <dbReference type="ChEBI" id="CHEBI:43474"/>
        <dbReference type="ChEBI" id="CHEBI:456216"/>
        <dbReference type="EC" id="3.6.4.13"/>
    </reaction>
</comment>
<comment type="subcellular location">
    <subcellularLocation>
        <location evidence="1">Nucleus</location>
    </subcellularLocation>
</comment>
<comment type="alternative products">
    <event type="alternative splicing"/>
    <isoform>
        <id>Q5JKF2-1</id>
        <name>1</name>
        <sequence type="displayed"/>
    </isoform>
    <isoform>
        <id>Q5JKF2-2</id>
        <name>2</name>
        <sequence type="described" ref="VSP_024159 VSP_024160"/>
    </isoform>
</comment>
<comment type="domain">
    <text>The Q motif is unique to and characteristic of the DEAD box family of RNA helicases and controls ATP binding and hydrolysis.</text>
</comment>
<comment type="similarity">
    <text evidence="7">Belongs to the DEAD box helicase family. DDX5/DBP2 subfamily.</text>
</comment>
<gene>
    <name type="ordered locus">Os01g0549400</name>
    <name type="ordered locus">LOC_Os01g36860</name>
    <name type="ORF">B1156H12.12-1</name>
    <name type="ORF">B1156H12.12-2</name>
    <name type="ORF">OsJ_02174</name>
</gene>
<proteinExistence type="evidence at transcript level"/>
<keyword id="KW-0025">Alternative splicing</keyword>
<keyword id="KW-0067">ATP-binding</keyword>
<keyword id="KW-0347">Helicase</keyword>
<keyword id="KW-0378">Hydrolase</keyword>
<keyword id="KW-0866">Nonsense-mediated mRNA decay</keyword>
<keyword id="KW-0547">Nucleotide-binding</keyword>
<keyword id="KW-0539">Nucleus</keyword>
<keyword id="KW-1185">Reference proteome</keyword>
<keyword id="KW-0690">Ribosome biogenesis</keyword>
<keyword id="KW-0694">RNA-binding</keyword>
<keyword id="KW-0698">rRNA processing</keyword>
<protein>
    <recommendedName>
        <fullName>DEAD-box ATP-dependent RNA helicase 40</fullName>
        <ecNumber>3.6.4.13</ecNumber>
    </recommendedName>
</protein>
<accession>Q5JKF2</accession>
<accession>A0A0P0V3W2</accession>
<accession>Q5JKF3</accession>
<name>RH40_ORYSJ</name>